<protein>
    <recommendedName>
        <fullName>Transmembrane protein 65</fullName>
    </recommendedName>
</protein>
<feature type="transit peptide" description="Mitochondrion" evidence="2">
    <location>
        <begin position="1"/>
        <end position="55"/>
    </location>
</feature>
<feature type="chain" id="PRO_0000251405" description="Transmembrane protein 65">
    <location>
        <begin position="56"/>
        <end position="234"/>
    </location>
</feature>
<feature type="topological domain" description="Cytoplasmic" evidence="1">
    <location>
        <begin position="56"/>
        <end position="110"/>
    </location>
</feature>
<feature type="transmembrane region" description="Helical" evidence="2">
    <location>
        <begin position="111"/>
        <end position="131"/>
    </location>
</feature>
<feature type="topological domain" description="Extracellular" evidence="1">
    <location>
        <begin position="132"/>
        <end position="138"/>
    </location>
</feature>
<feature type="transmembrane region" description="Helical" evidence="2">
    <location>
        <begin position="139"/>
        <end position="159"/>
    </location>
</feature>
<feature type="topological domain" description="Cytoplasmic" evidence="1">
    <location>
        <begin position="160"/>
        <end position="203"/>
    </location>
</feature>
<feature type="transmembrane region" description="Helical" evidence="2">
    <location>
        <begin position="204"/>
        <end position="224"/>
    </location>
</feature>
<feature type="topological domain" description="Extracellular" evidence="1">
    <location>
        <begin position="225"/>
        <end position="234"/>
    </location>
</feature>
<proteinExistence type="evidence at protein level"/>
<reference key="1">
    <citation type="journal article" date="2004" name="Genome Res.">
        <title>The status, quality, and expansion of the NIH full-length cDNA project: the Mammalian Gene Collection (MGC).</title>
        <authorList>
            <consortium name="The MGC Project Team"/>
        </authorList>
    </citation>
    <scope>NUCLEOTIDE SEQUENCE [LARGE SCALE MRNA]</scope>
    <source>
        <strain>FVB/N</strain>
        <tissue>Eye</tissue>
        <tissue>Mammary tumor</tissue>
    </source>
</reference>
<reference key="2">
    <citation type="journal article" date="2010" name="Cell">
        <title>A tissue-specific atlas of mouse protein phosphorylation and expression.</title>
        <authorList>
            <person name="Huttlin E.L."/>
            <person name="Jedrychowski M.P."/>
            <person name="Elias J.E."/>
            <person name="Goswami T."/>
            <person name="Rad R."/>
            <person name="Beausoleil S.A."/>
            <person name="Villen J."/>
            <person name="Haas W."/>
            <person name="Sowa M.E."/>
            <person name="Gygi S.P."/>
        </authorList>
    </citation>
    <scope>IDENTIFICATION BY MASS SPECTROMETRY [LARGE SCALE ANALYSIS]</scope>
    <source>
        <tissue>Brain</tissue>
        <tissue>Brown adipose tissue</tissue>
        <tissue>Heart</tissue>
        <tissue>Kidney</tissue>
        <tissue>Lung</tissue>
        <tissue>Testis</tissue>
    </source>
</reference>
<reference key="3">
    <citation type="journal article" date="2015" name="Nat. Commun.">
        <title>Evolutionarily conserved intercalated disc protein Tmem65 regulates cardiac conduction and connexin 43 function.</title>
        <authorList>
            <person name="Sharma P."/>
            <person name="Abbasi C."/>
            <person name="Lazic S."/>
            <person name="Teng A.C."/>
            <person name="Wang D."/>
            <person name="Dubois N."/>
            <person name="Ignatchenko V."/>
            <person name="Wong V."/>
            <person name="Liu J."/>
            <person name="Araki T."/>
            <person name="Tiburcy M."/>
            <person name="Ackerley C."/>
            <person name="Zimmermann W.H."/>
            <person name="Hamilton R."/>
            <person name="Sun Y."/>
            <person name="Liu P.P."/>
            <person name="Keller G."/>
            <person name="Stagljar I."/>
            <person name="Scott I.C."/>
            <person name="Kislinger T."/>
            <person name="Gramolini A.O."/>
        </authorList>
    </citation>
    <scope>FUNCTION</scope>
    <scope>SUBUNIT</scope>
    <scope>SUBCELLULAR LOCATION</scope>
    <scope>TISSUE SPECIFICITY</scope>
    <scope>DEVELOPMENTAL STAGE</scope>
    <scope>INTERACTION WITH GJA1 AND DSP</scope>
</reference>
<reference key="4">
    <citation type="journal article" date="2022" name="Nat. Commun.">
        <title>Tmem65 is critical for the structure and function of the intercalated discs in mouse hearts.</title>
        <authorList>
            <person name="Teng A.C.T."/>
            <person name="Gu L."/>
            <person name="Di Paola M."/>
            <person name="Lakin R."/>
            <person name="Williams Z.J."/>
            <person name="Au A."/>
            <person name="Chen W."/>
            <person name="Callaghan N.I."/>
            <person name="Zadeh F.H."/>
            <person name="Zhou Y.Q."/>
            <person name="Fatah M."/>
            <person name="Chatterjee D."/>
            <person name="Jourdan L.J."/>
            <person name="Liu J."/>
            <person name="Simmons C.A."/>
            <person name="Kislinger T."/>
            <person name="Yip C.M."/>
            <person name="Backx P.H."/>
            <person name="Gourdie R.G."/>
            <person name="Hamilton R.M."/>
            <person name="Gramolini A.O."/>
        </authorList>
    </citation>
    <scope>FUNCTION</scope>
    <scope>DISRUPTION PHENOTYPE</scope>
    <scope>INTERACTION WITH SCN1B</scope>
</reference>
<sequence length="234" mass="24918">MSRLLPLLGSRTARSLRPGPAAAPRLPSWCCCGRGLLALGVPGGPRLLGTHPKKEPMEALNTAQGARDFIYSLHSTERSCLLKELHRFESIAIAQEKLEALPPTPGQLRYVFFHNAIPFVGFGFLDNAIMIVAGTQIELSIGIILGISTMAAAALGNLVSDLAGLGLAGYVEALASRLGLSIPDLTPKQVDMWQTRVSTHLGKAVGVTIGCILGMFPLIFFGGSEEDEKLETTN</sequence>
<dbReference type="EMBL" id="BC049380">
    <property type="protein sequence ID" value="AAH49380.1"/>
    <property type="status" value="ALT_INIT"/>
    <property type="molecule type" value="mRNA"/>
</dbReference>
<dbReference type="EMBL" id="BC096426">
    <property type="protein sequence ID" value="AAH96426.1"/>
    <property type="molecule type" value="mRNA"/>
</dbReference>
<dbReference type="CCDS" id="CCDS27493.1"/>
<dbReference type="RefSeq" id="NP_780421.2">
    <property type="nucleotide sequence ID" value="NM_175212.4"/>
</dbReference>
<dbReference type="BioGRID" id="217041">
    <property type="interactions" value="3"/>
</dbReference>
<dbReference type="FunCoup" id="Q4VAE3">
    <property type="interactions" value="422"/>
</dbReference>
<dbReference type="IntAct" id="Q4VAE3">
    <property type="interactions" value="2"/>
</dbReference>
<dbReference type="STRING" id="10090.ENSMUSP00000071984"/>
<dbReference type="GlyGen" id="Q4VAE3">
    <property type="glycosylation" value="1 site"/>
</dbReference>
<dbReference type="SwissPalm" id="Q4VAE3"/>
<dbReference type="jPOST" id="Q4VAE3"/>
<dbReference type="PaxDb" id="10090-ENSMUSP00000071984"/>
<dbReference type="PeptideAtlas" id="Q4VAE3"/>
<dbReference type="ProteomicsDB" id="259133"/>
<dbReference type="Pumba" id="Q4VAE3"/>
<dbReference type="Antibodypedia" id="13901">
    <property type="antibodies" value="100 antibodies from 17 providers"/>
</dbReference>
<dbReference type="Ensembl" id="ENSMUST00000072113.6">
    <property type="protein sequence ID" value="ENSMUSP00000071984.6"/>
    <property type="gene ID" value="ENSMUSG00000062373.9"/>
</dbReference>
<dbReference type="GeneID" id="74868"/>
<dbReference type="KEGG" id="mmu:74868"/>
<dbReference type="UCSC" id="uc007vto.1">
    <property type="organism name" value="mouse"/>
</dbReference>
<dbReference type="AGR" id="MGI:1922118"/>
<dbReference type="CTD" id="157378"/>
<dbReference type="MGI" id="MGI:1922118">
    <property type="gene designation" value="Tmem65"/>
</dbReference>
<dbReference type="VEuPathDB" id="HostDB:ENSMUSG00000062373"/>
<dbReference type="eggNOG" id="KOG4619">
    <property type="taxonomic scope" value="Eukaryota"/>
</dbReference>
<dbReference type="GeneTree" id="ENSGT00390000017802"/>
<dbReference type="HOGENOM" id="CLU_075402_1_0_1"/>
<dbReference type="InParanoid" id="Q4VAE3"/>
<dbReference type="OMA" id="CNLGTHP"/>
<dbReference type="OrthoDB" id="430821at2759"/>
<dbReference type="PhylomeDB" id="Q4VAE3"/>
<dbReference type="TreeFam" id="TF105823"/>
<dbReference type="BioGRID-ORCS" id="74868">
    <property type="hits" value="2 hits in 78 CRISPR screens"/>
</dbReference>
<dbReference type="ChiTaRS" id="Tmem65">
    <property type="organism name" value="mouse"/>
</dbReference>
<dbReference type="PRO" id="PR:Q4VAE3"/>
<dbReference type="Proteomes" id="UP000000589">
    <property type="component" value="Chromosome 15"/>
</dbReference>
<dbReference type="RNAct" id="Q4VAE3">
    <property type="molecule type" value="protein"/>
</dbReference>
<dbReference type="Bgee" id="ENSMUSG00000062373">
    <property type="expression patterns" value="Expressed in extra-ocular muscle and 223 other cell types or tissues"/>
</dbReference>
<dbReference type="GO" id="GO:0014704">
    <property type="term" value="C:intercalated disc"/>
    <property type="evidence" value="ECO:0000314"/>
    <property type="project" value="UniProtKB"/>
</dbReference>
<dbReference type="GO" id="GO:0005743">
    <property type="term" value="C:mitochondrial inner membrane"/>
    <property type="evidence" value="ECO:0000250"/>
    <property type="project" value="UniProtKB"/>
</dbReference>
<dbReference type="GO" id="GO:0005739">
    <property type="term" value="C:mitochondrion"/>
    <property type="evidence" value="ECO:0007005"/>
    <property type="project" value="MGI"/>
</dbReference>
<dbReference type="GO" id="GO:0005730">
    <property type="term" value="C:nucleolus"/>
    <property type="evidence" value="ECO:0007669"/>
    <property type="project" value="Ensembl"/>
</dbReference>
<dbReference type="GO" id="GO:0005886">
    <property type="term" value="C:plasma membrane"/>
    <property type="evidence" value="ECO:0000314"/>
    <property type="project" value="UniProtKB"/>
</dbReference>
<dbReference type="GO" id="GO:0061337">
    <property type="term" value="P:cardiac conduction"/>
    <property type="evidence" value="ECO:0000315"/>
    <property type="project" value="UniProtKB"/>
</dbReference>
<dbReference type="GO" id="GO:0003231">
    <property type="term" value="P:cardiac ventricle development"/>
    <property type="evidence" value="ECO:0000315"/>
    <property type="project" value="UniProtKB"/>
</dbReference>
<dbReference type="GO" id="GO:1903779">
    <property type="term" value="P:regulation of cardiac conduction"/>
    <property type="evidence" value="ECO:0000315"/>
    <property type="project" value="UniProtKB"/>
</dbReference>
<dbReference type="InterPro" id="IPR019537">
    <property type="entry name" value="TMEM65"/>
</dbReference>
<dbReference type="PANTHER" id="PTHR21706">
    <property type="entry name" value="TRANSMEMBRANE PROTEIN 65"/>
    <property type="match status" value="1"/>
</dbReference>
<dbReference type="PANTHER" id="PTHR21706:SF15">
    <property type="entry name" value="TRANSMEMBRANE PROTEIN 65"/>
    <property type="match status" value="1"/>
</dbReference>
<dbReference type="Pfam" id="PF10507">
    <property type="entry name" value="TMEM65"/>
    <property type="match status" value="1"/>
</dbReference>
<evidence type="ECO:0000250" key="1">
    <source>
        <dbReference type="UniProtKB" id="Q6PI78"/>
    </source>
</evidence>
<evidence type="ECO:0000255" key="2"/>
<evidence type="ECO:0000269" key="3">
    <source>
    </source>
</evidence>
<evidence type="ECO:0000269" key="4">
    <source>
    </source>
</evidence>
<evidence type="ECO:0000305" key="5"/>
<comment type="function">
    <text evidence="1 3 4">Essential for maintaining proper cardiac intercalated disk (ICD) structure and function as well as cardiac conduction velocity in the heart (PubMed:36257954). Its association with SCN1B is required for stabilizing the perinexus in the ICD and for localization of GJA1 and SCN5A to the ICD (PubMed:36257954). May regulate the function of the gap junction protein GJA1 and may contribute to the stability and proper localization of GJA1 to cardiac intercalated disk thereby regulating gap junction communication (PubMed:26403541). Regulates mitochondrial respiration and mitochondrial DNA copy number maintenance (By similarity).</text>
</comment>
<comment type="subunit">
    <text evidence="3 4">Monomer. Homodimer. Interacts with GJA1. Interacts weakly with DSP. Interacts with SCN1B (PubMed:36257954).</text>
</comment>
<comment type="subcellular location">
    <subcellularLocation>
        <location evidence="3">Cell membrane</location>
        <topology evidence="2">Multi-pass membrane protein</topology>
    </subcellularLocation>
    <subcellularLocation>
        <location evidence="1">Mitochondrion inner membrane</location>
        <topology evidence="2">Multi-pass membrane protein</topology>
    </subcellularLocation>
    <text evidence="3">Localizes at the intercalated disk in ventricular tissue and cardiomyocytes.</text>
</comment>
<comment type="tissue specificity">
    <text evidence="3">Predominantly expressed in the ventricular tissue (at protein level).</text>
</comment>
<comment type="developmental stage">
    <text evidence="3">Low level expression seen in the heart between 8.5 dpc and 15.5 dpc. Expression levels increase progressively after birth, with the highest levels seen in adults.</text>
</comment>
<comment type="disruption phenotype">
    <text evidence="4">Knockdown leads to irregular staining patterns of perinexal proteins, altered calcium and potassium currents, impaired cardiac conduction, and intercalated disks structural defects in both cellular and histological levels (PubMed:36257954). Hearts ultimately develop dilated cardiomyopathy, severe fibrosis and congestive heart failure (PubMed:36257954).</text>
</comment>
<comment type="sequence caution" evidence="5">
    <conflict type="erroneous initiation">
        <sequence resource="EMBL-CDS" id="AAH49380"/>
    </conflict>
    <text>Truncated N-terminus.</text>
</comment>
<keyword id="KW-1003">Cell membrane</keyword>
<keyword id="KW-0472">Membrane</keyword>
<keyword id="KW-0496">Mitochondrion</keyword>
<keyword id="KW-0999">Mitochondrion inner membrane</keyword>
<keyword id="KW-1185">Reference proteome</keyword>
<keyword id="KW-0809">Transit peptide</keyword>
<keyword id="KW-0812">Transmembrane</keyword>
<keyword id="KW-1133">Transmembrane helix</keyword>
<name>TMM65_MOUSE</name>
<gene>
    <name type="primary">Tmem65</name>
</gene>
<organism>
    <name type="scientific">Mus musculus</name>
    <name type="common">Mouse</name>
    <dbReference type="NCBI Taxonomy" id="10090"/>
    <lineage>
        <taxon>Eukaryota</taxon>
        <taxon>Metazoa</taxon>
        <taxon>Chordata</taxon>
        <taxon>Craniata</taxon>
        <taxon>Vertebrata</taxon>
        <taxon>Euteleostomi</taxon>
        <taxon>Mammalia</taxon>
        <taxon>Eutheria</taxon>
        <taxon>Euarchontoglires</taxon>
        <taxon>Glires</taxon>
        <taxon>Rodentia</taxon>
        <taxon>Myomorpha</taxon>
        <taxon>Muroidea</taxon>
        <taxon>Muridae</taxon>
        <taxon>Murinae</taxon>
        <taxon>Mus</taxon>
        <taxon>Mus</taxon>
    </lineage>
</organism>
<accession>Q4VAE3</accession>
<accession>Q810S8</accession>